<proteinExistence type="evidence at protein level"/>
<sequence>GSSGMIPFPRV</sequence>
<accession>P85537</accession>
<evidence type="ECO:0000255" key="1"/>
<evidence type="ECO:0000269" key="2">
    <source>
    </source>
</evidence>
<evidence type="ECO:0000303" key="3">
    <source>
    </source>
</evidence>
<evidence type="ECO:0000305" key="4"/>
<protein>
    <recommendedName>
        <fullName evidence="3">Periviscerokinin-3</fullName>
        <shortName evidence="3">ArcTe-PVK-3</shortName>
    </recommendedName>
</protein>
<keyword id="KW-0027">Amidation</keyword>
<keyword id="KW-0903">Direct protein sequencing</keyword>
<keyword id="KW-0527">Neuropeptide</keyword>
<keyword id="KW-0964">Secreted</keyword>
<comment type="function">
    <text evidence="4">Mediates visceral muscle contractile activity (myotropic activity).</text>
</comment>
<comment type="subcellular location">
    <subcellularLocation>
        <location evidence="4">Secreted</location>
    </subcellularLocation>
</comment>
<comment type="similarity">
    <text evidence="1">Belongs to the periviscerokinin family.</text>
</comment>
<dbReference type="GO" id="GO:0005576">
    <property type="term" value="C:extracellular region"/>
    <property type="evidence" value="ECO:0007669"/>
    <property type="project" value="UniProtKB-SubCell"/>
</dbReference>
<dbReference type="GO" id="GO:0007218">
    <property type="term" value="P:neuropeptide signaling pathway"/>
    <property type="evidence" value="ECO:0007669"/>
    <property type="project" value="UniProtKB-KW"/>
</dbReference>
<dbReference type="InterPro" id="IPR013231">
    <property type="entry name" value="Periviscerokinin"/>
</dbReference>
<dbReference type="Pfam" id="PF08259">
    <property type="entry name" value="Periviscerokin"/>
    <property type="match status" value="1"/>
</dbReference>
<name>PVK3_ARCTE</name>
<reference evidence="4" key="1">
    <citation type="journal article" date="2009" name="BMC Evol. Biol.">
        <title>A proteomic approach for studying insect phylogeny: CAPA peptides of ancient insect taxa (Dictyoptera, Blattoptera) as a test case.</title>
        <authorList>
            <person name="Roth S."/>
            <person name="Fromm B."/>
            <person name="Gaede G."/>
            <person name="Predel R."/>
        </authorList>
    </citation>
    <scope>PROTEIN SEQUENCE</scope>
    <scope>AMIDATION AT VAL-11</scope>
    <source>
        <tissue evidence="2">Abdominal perisympathetic organs</tissue>
    </source>
</reference>
<organism>
    <name type="scientific">Archimandrita tessellata</name>
    <name type="common">Peppered roach</name>
    <name type="synonym">Giant cockroach</name>
    <dbReference type="NCBI Taxonomy" id="36945"/>
    <lineage>
        <taxon>Eukaryota</taxon>
        <taxon>Metazoa</taxon>
        <taxon>Ecdysozoa</taxon>
        <taxon>Arthropoda</taxon>
        <taxon>Hexapoda</taxon>
        <taxon>Insecta</taxon>
        <taxon>Pterygota</taxon>
        <taxon>Neoptera</taxon>
        <taxon>Polyneoptera</taxon>
        <taxon>Dictyoptera</taxon>
        <taxon>Blattodea</taxon>
        <taxon>Blaberoidea</taxon>
        <taxon>Blaberidae</taxon>
        <taxon>Blaberinae</taxon>
        <taxon>Archimandrita</taxon>
    </lineage>
</organism>
<feature type="peptide" id="PRO_0000378817" description="Periviscerokinin-3" evidence="2">
    <location>
        <begin position="1"/>
        <end position="11"/>
    </location>
</feature>
<feature type="modified residue" description="Valine amide" evidence="2">
    <location>
        <position position="11"/>
    </location>
</feature>